<keyword id="KW-0614">Plasmid</keyword>
<sequence>MAAYTSETAKFLQSVSSDQTWWKSRYNPGDSVPHSGIYRCTVCGKEITSNGNDPFPPQNHHQHSQQQAIKWQLIVRTDTKGDRFGIK</sequence>
<feature type="chain" id="PRO_0000068359" description="Protein L">
    <location>
        <begin position="1"/>
        <end position="87"/>
    </location>
</feature>
<proteinExistence type="predicted"/>
<geneLocation type="plasmid">
    <name>Clo DF13</name>
</geneLocation>
<name>GENL_ECOLX</name>
<dbReference type="EMBL" id="X04466">
    <property type="protein sequence ID" value="CAA28149.1"/>
    <property type="molecule type" value="Genomic_DNA"/>
</dbReference>
<dbReference type="PIR" id="A03517">
    <property type="entry name" value="QVECL"/>
</dbReference>
<dbReference type="RefSeq" id="NP_052374.1">
    <property type="nucleotide sequence ID" value="NC_002119.1"/>
</dbReference>
<dbReference type="RefSeq" id="WP_010891192.1">
    <property type="nucleotide sequence ID" value="NZ_UNQR01000060.1"/>
</dbReference>
<organism>
    <name type="scientific">Escherichia coli</name>
    <dbReference type="NCBI Taxonomy" id="562"/>
    <lineage>
        <taxon>Bacteria</taxon>
        <taxon>Pseudomonadati</taxon>
        <taxon>Pseudomonadota</taxon>
        <taxon>Gammaproteobacteria</taxon>
        <taxon>Enterobacterales</taxon>
        <taxon>Enterobacteriaceae</taxon>
        <taxon>Escherichia</taxon>
    </lineage>
</organism>
<gene>
    <name type="primary">L</name>
    <name type="synonym">dpi</name>
</gene>
<protein>
    <recommendedName>
        <fullName>Protein L</fullName>
    </recommendedName>
</protein>
<reference key="1">
    <citation type="journal article" date="1986" name="Plasmid">
        <title>The complete nucleotide sequence of the bacteriocinogenic plasmid CloDF13.</title>
        <authorList>
            <person name="Nijkamp H.J.J."/>
            <person name="de Lang R."/>
            <person name="Stuitje A.R."/>
            <person name="van den Elsen P.J.M."/>
            <person name="Veltkamp E."/>
            <person name="van Putten A.J."/>
        </authorList>
    </citation>
    <scope>NUCLEOTIDE SEQUENCE [GENOMIC DNA]</scope>
</reference>
<reference key="2">
    <citation type="journal article" date="1983" name="Nucleic Acids Res.">
        <title>Structure and regulation of gene expression of a Clo DF13 plasmid DNA region involved in plasmid segregation and incompatibility.</title>
        <authorList>
            <person name="van den Elzen P.J.M."/>
            <person name="Hakkaart M.J.J."/>
            <person name="van Putten A.J."/>
            <person name="Walters H.H.B."/>
            <person name="Veltkamp E."/>
            <person name="Nijkamp H.J.J."/>
        </authorList>
    </citation>
    <scope>NUCLEOTIDE SEQUENCE [GENOMIC DNA]</scope>
</reference>
<comment type="function">
    <text>This protein inhibits the multiplication of double-stranded DNA phages, such as P1 and lambda.</text>
</comment>
<comment type="miscellaneous">
    <text>Plasmid Clo DF13 originates from Enterobacter cloacae but is stably maintained in and studied mostly from E.coli.</text>
</comment>
<accession>P02989</accession>